<protein>
    <recommendedName>
        <fullName evidence="1">Large-conductance mechanosensitive channel</fullName>
    </recommendedName>
</protein>
<keyword id="KW-1003">Cell membrane</keyword>
<keyword id="KW-0407">Ion channel</keyword>
<keyword id="KW-0406">Ion transport</keyword>
<keyword id="KW-0472">Membrane</keyword>
<keyword id="KW-0812">Transmembrane</keyword>
<keyword id="KW-1133">Transmembrane helix</keyword>
<keyword id="KW-0813">Transport</keyword>
<organism>
    <name type="scientific">Desulfitobacterium hafniense (strain DSM 10664 / DCB-2)</name>
    <dbReference type="NCBI Taxonomy" id="272564"/>
    <lineage>
        <taxon>Bacteria</taxon>
        <taxon>Bacillati</taxon>
        <taxon>Bacillota</taxon>
        <taxon>Clostridia</taxon>
        <taxon>Eubacteriales</taxon>
        <taxon>Desulfitobacteriaceae</taxon>
        <taxon>Desulfitobacterium</taxon>
    </lineage>
</organism>
<comment type="function">
    <text evidence="1">Channel that opens in response to stretch forces in the membrane lipid bilayer. May participate in the regulation of osmotic pressure changes within the cell.</text>
</comment>
<comment type="subunit">
    <text evidence="1">Homopentamer.</text>
</comment>
<comment type="subcellular location">
    <subcellularLocation>
        <location evidence="1">Cell membrane</location>
        <topology evidence="1">Multi-pass membrane protein</topology>
    </subcellularLocation>
</comment>
<comment type="similarity">
    <text evidence="1">Belongs to the MscL family.</text>
</comment>
<gene>
    <name evidence="1" type="primary">mscL</name>
    <name type="ordered locus">Dhaf_2389</name>
</gene>
<sequence length="150" mass="16616">MWKEFKEFAMKGNVIDLAVGVIIGGAFGKIVTSLVNDVIMPLVGLLLGQMDFSNAFITLGKGDFATIAEAQAAKVPTLNYGLFINNVVDFLIIAFTIFIVIKQINRFNRKKEVKEEVAEEKATKPCPYCYVEIHKEATRCPHCTSVLESP</sequence>
<feature type="chain" id="PRO_1000191361" description="Large-conductance mechanosensitive channel">
    <location>
        <begin position="1"/>
        <end position="150"/>
    </location>
</feature>
<feature type="transmembrane region" description="Helical" evidence="1">
    <location>
        <begin position="14"/>
        <end position="34"/>
    </location>
</feature>
<feature type="transmembrane region" description="Helical" evidence="1">
    <location>
        <begin position="81"/>
        <end position="101"/>
    </location>
</feature>
<accession>B8FTI4</accession>
<reference key="1">
    <citation type="journal article" date="2012" name="BMC Microbiol.">
        <title>Genome sequence of Desulfitobacterium hafniense DCB-2, a Gram-positive anaerobe capable of dehalogenation and metal reduction.</title>
        <authorList>
            <person name="Kim S.H."/>
            <person name="Harzman C."/>
            <person name="Davis J.K."/>
            <person name="Hutcheson R."/>
            <person name="Broderick J.B."/>
            <person name="Marsh T.L."/>
            <person name="Tiedje J.M."/>
        </authorList>
    </citation>
    <scope>NUCLEOTIDE SEQUENCE [LARGE SCALE GENOMIC DNA]</scope>
    <source>
        <strain>DSM 10664 / DCB-2</strain>
    </source>
</reference>
<evidence type="ECO:0000255" key="1">
    <source>
        <dbReference type="HAMAP-Rule" id="MF_00115"/>
    </source>
</evidence>
<dbReference type="EMBL" id="CP001336">
    <property type="protein sequence ID" value="ACL20418.1"/>
    <property type="molecule type" value="Genomic_DNA"/>
</dbReference>
<dbReference type="RefSeq" id="WP_005814614.1">
    <property type="nucleotide sequence ID" value="NC_011830.1"/>
</dbReference>
<dbReference type="SMR" id="B8FTI4"/>
<dbReference type="KEGG" id="dhd:Dhaf_2389"/>
<dbReference type="HOGENOM" id="CLU_095787_2_3_9"/>
<dbReference type="Proteomes" id="UP000007726">
    <property type="component" value="Chromosome"/>
</dbReference>
<dbReference type="GO" id="GO:0005886">
    <property type="term" value="C:plasma membrane"/>
    <property type="evidence" value="ECO:0007669"/>
    <property type="project" value="UniProtKB-SubCell"/>
</dbReference>
<dbReference type="GO" id="GO:0008381">
    <property type="term" value="F:mechanosensitive monoatomic ion channel activity"/>
    <property type="evidence" value="ECO:0007669"/>
    <property type="project" value="UniProtKB-UniRule"/>
</dbReference>
<dbReference type="Gene3D" id="1.10.1200.120">
    <property type="entry name" value="Large-conductance mechanosensitive channel, MscL, domain 1"/>
    <property type="match status" value="1"/>
</dbReference>
<dbReference type="HAMAP" id="MF_00115">
    <property type="entry name" value="MscL"/>
    <property type="match status" value="1"/>
</dbReference>
<dbReference type="InterPro" id="IPR019823">
    <property type="entry name" value="Mechanosensitive_channel_CS"/>
</dbReference>
<dbReference type="InterPro" id="IPR001185">
    <property type="entry name" value="MS_channel"/>
</dbReference>
<dbReference type="InterPro" id="IPR037673">
    <property type="entry name" value="MSC/AndL"/>
</dbReference>
<dbReference type="InterPro" id="IPR036019">
    <property type="entry name" value="MscL_channel"/>
</dbReference>
<dbReference type="NCBIfam" id="TIGR00220">
    <property type="entry name" value="mscL"/>
    <property type="match status" value="1"/>
</dbReference>
<dbReference type="NCBIfam" id="NF001843">
    <property type="entry name" value="PRK00567.1-4"/>
    <property type="match status" value="1"/>
</dbReference>
<dbReference type="NCBIfam" id="NF010557">
    <property type="entry name" value="PRK13952.1"/>
    <property type="match status" value="1"/>
</dbReference>
<dbReference type="PANTHER" id="PTHR30266:SF2">
    <property type="entry name" value="LARGE-CONDUCTANCE MECHANOSENSITIVE CHANNEL"/>
    <property type="match status" value="1"/>
</dbReference>
<dbReference type="PANTHER" id="PTHR30266">
    <property type="entry name" value="MECHANOSENSITIVE CHANNEL MSCL"/>
    <property type="match status" value="1"/>
</dbReference>
<dbReference type="Pfam" id="PF01741">
    <property type="entry name" value="MscL"/>
    <property type="match status" value="1"/>
</dbReference>
<dbReference type="PRINTS" id="PR01264">
    <property type="entry name" value="MECHCHANNEL"/>
</dbReference>
<dbReference type="SUPFAM" id="SSF81330">
    <property type="entry name" value="Gated mechanosensitive channel"/>
    <property type="match status" value="1"/>
</dbReference>
<dbReference type="PROSITE" id="PS01327">
    <property type="entry name" value="MSCL"/>
    <property type="match status" value="1"/>
</dbReference>
<proteinExistence type="inferred from homology"/>
<name>MSCL_DESHD</name>